<name>SYY_STRR6</name>
<sequence>MHIFDELKERGLIFQTTDEEALRKALEEGQVSYYTGYDPTADSLHLGHLVAILTSRRLQLAGHKPYALVGGATGLIGDPSFKDAERSLQTKDTVDGWVKSIQGQLSRFLDFENGENKAVMVNNYDWFGSISFIDFLRDIGKYFTVNYMMSKESVKKRIETGISYTEFAYQIMQGYDFFVLNQDHNVTLQIGGSDQWGNMTAGTELLRRKADKTGHVITVPLITDATGKKFGKSEGNAVWLNPEKTSPYEMYQFWMNVMDADAVRFLKIFTFLSLDEIEDIRKQFEAAPHERLAQKVLAREVVTLVHGEEAYKEALNITEQLFAGNIKNLSVKELKQGLRGVPNYQVQADENNNIVELLVSSGIVNSKRQAREDVQNGAIYVNGDRIQELDYVLSDADKLENELTVIRRGKKKYFVLTY</sequence>
<protein>
    <recommendedName>
        <fullName evidence="1">Tyrosine--tRNA ligase</fullName>
        <ecNumber evidence="1">6.1.1.1</ecNumber>
    </recommendedName>
    <alternativeName>
        <fullName evidence="1">Tyrosyl-tRNA synthetase</fullName>
        <shortName evidence="1">TyrRS</shortName>
    </alternativeName>
</protein>
<evidence type="ECO:0000255" key="1">
    <source>
        <dbReference type="HAMAP-Rule" id="MF_02006"/>
    </source>
</evidence>
<accession>Q8DN52</accession>
<feature type="chain" id="PRO_0000234789" description="Tyrosine--tRNA ligase">
    <location>
        <begin position="1"/>
        <end position="418"/>
    </location>
</feature>
<feature type="domain" description="S4 RNA-binding" evidence="1">
    <location>
        <begin position="352"/>
        <end position="418"/>
    </location>
</feature>
<feature type="short sequence motif" description="'HIGH' region">
    <location>
        <begin position="39"/>
        <end position="48"/>
    </location>
</feature>
<feature type="short sequence motif" description="'KMSKS' region">
    <location>
        <begin position="229"/>
        <end position="233"/>
    </location>
</feature>
<feature type="binding site" evidence="1">
    <location>
        <position position="34"/>
    </location>
    <ligand>
        <name>L-tyrosine</name>
        <dbReference type="ChEBI" id="CHEBI:58315"/>
    </ligand>
</feature>
<feature type="binding site" evidence="1">
    <location>
        <position position="169"/>
    </location>
    <ligand>
        <name>L-tyrosine</name>
        <dbReference type="ChEBI" id="CHEBI:58315"/>
    </ligand>
</feature>
<feature type="binding site" evidence="1">
    <location>
        <position position="173"/>
    </location>
    <ligand>
        <name>L-tyrosine</name>
        <dbReference type="ChEBI" id="CHEBI:58315"/>
    </ligand>
</feature>
<feature type="binding site" evidence="1">
    <location>
        <position position="232"/>
    </location>
    <ligand>
        <name>ATP</name>
        <dbReference type="ChEBI" id="CHEBI:30616"/>
    </ligand>
</feature>
<reference key="1">
    <citation type="journal article" date="2001" name="J. Bacteriol.">
        <title>Genome of the bacterium Streptococcus pneumoniae strain R6.</title>
        <authorList>
            <person name="Hoskins J."/>
            <person name="Alborn W.E. Jr."/>
            <person name="Arnold J."/>
            <person name="Blaszczak L.C."/>
            <person name="Burgett S."/>
            <person name="DeHoff B.S."/>
            <person name="Estrem S.T."/>
            <person name="Fritz L."/>
            <person name="Fu D.-J."/>
            <person name="Fuller W."/>
            <person name="Geringer C."/>
            <person name="Gilmour R."/>
            <person name="Glass J.S."/>
            <person name="Khoja H."/>
            <person name="Kraft A.R."/>
            <person name="Lagace R.E."/>
            <person name="LeBlanc D.J."/>
            <person name="Lee L.N."/>
            <person name="Lefkowitz E.J."/>
            <person name="Lu J."/>
            <person name="Matsushima P."/>
            <person name="McAhren S.M."/>
            <person name="McHenney M."/>
            <person name="McLeaster K."/>
            <person name="Mundy C.W."/>
            <person name="Nicas T.I."/>
            <person name="Norris F.H."/>
            <person name="O'Gara M."/>
            <person name="Peery R.B."/>
            <person name="Robertson G.T."/>
            <person name="Rockey P."/>
            <person name="Sun P.-M."/>
            <person name="Winkler M.E."/>
            <person name="Yang Y."/>
            <person name="Young-Bellido M."/>
            <person name="Zhao G."/>
            <person name="Zook C.A."/>
            <person name="Baltz R.H."/>
            <person name="Jaskunas S.R."/>
            <person name="Rosteck P.R. Jr."/>
            <person name="Skatrud P.L."/>
            <person name="Glass J.I."/>
        </authorList>
    </citation>
    <scope>NUCLEOTIDE SEQUENCE [LARGE SCALE GENOMIC DNA]</scope>
    <source>
        <strain>ATCC BAA-255 / R6</strain>
    </source>
</reference>
<comment type="function">
    <text evidence="1">Catalyzes the attachment of tyrosine to tRNA(Tyr) in a two-step reaction: tyrosine is first activated by ATP to form Tyr-AMP and then transferred to the acceptor end of tRNA(Tyr).</text>
</comment>
<comment type="catalytic activity">
    <reaction evidence="1">
        <text>tRNA(Tyr) + L-tyrosine + ATP = L-tyrosyl-tRNA(Tyr) + AMP + diphosphate + H(+)</text>
        <dbReference type="Rhea" id="RHEA:10220"/>
        <dbReference type="Rhea" id="RHEA-COMP:9706"/>
        <dbReference type="Rhea" id="RHEA-COMP:9707"/>
        <dbReference type="ChEBI" id="CHEBI:15378"/>
        <dbReference type="ChEBI" id="CHEBI:30616"/>
        <dbReference type="ChEBI" id="CHEBI:33019"/>
        <dbReference type="ChEBI" id="CHEBI:58315"/>
        <dbReference type="ChEBI" id="CHEBI:78442"/>
        <dbReference type="ChEBI" id="CHEBI:78536"/>
        <dbReference type="ChEBI" id="CHEBI:456215"/>
        <dbReference type="EC" id="6.1.1.1"/>
    </reaction>
</comment>
<comment type="subunit">
    <text evidence="1">Homodimer.</text>
</comment>
<comment type="subcellular location">
    <subcellularLocation>
        <location evidence="1">Cytoplasm</location>
    </subcellularLocation>
</comment>
<comment type="similarity">
    <text evidence="1">Belongs to the class-I aminoacyl-tRNA synthetase family. TyrS type 1 subfamily.</text>
</comment>
<keyword id="KW-0030">Aminoacyl-tRNA synthetase</keyword>
<keyword id="KW-0067">ATP-binding</keyword>
<keyword id="KW-0963">Cytoplasm</keyword>
<keyword id="KW-0436">Ligase</keyword>
<keyword id="KW-0547">Nucleotide-binding</keyword>
<keyword id="KW-0648">Protein biosynthesis</keyword>
<keyword id="KW-1185">Reference proteome</keyword>
<keyword id="KW-0694">RNA-binding</keyword>
<organism>
    <name type="scientific">Streptococcus pneumoniae (strain ATCC BAA-255 / R6)</name>
    <dbReference type="NCBI Taxonomy" id="171101"/>
    <lineage>
        <taxon>Bacteria</taxon>
        <taxon>Bacillati</taxon>
        <taxon>Bacillota</taxon>
        <taxon>Bacilli</taxon>
        <taxon>Lactobacillales</taxon>
        <taxon>Streptococcaceae</taxon>
        <taxon>Streptococcus</taxon>
    </lineage>
</organism>
<proteinExistence type="inferred from homology"/>
<dbReference type="EC" id="6.1.1.1" evidence="1"/>
<dbReference type="EMBL" id="AE007317">
    <property type="protein sequence ID" value="AAL00712.1"/>
    <property type="molecule type" value="Genomic_DNA"/>
</dbReference>
<dbReference type="PIR" id="C98110">
    <property type="entry name" value="C98110"/>
</dbReference>
<dbReference type="RefSeq" id="NP_359501.1">
    <property type="nucleotide sequence ID" value="NC_003098.1"/>
</dbReference>
<dbReference type="RefSeq" id="WP_000546887.1">
    <property type="nucleotide sequence ID" value="NC_003098.1"/>
</dbReference>
<dbReference type="SMR" id="Q8DN52"/>
<dbReference type="STRING" id="171101.spr1910"/>
<dbReference type="KEGG" id="spr:spr1910"/>
<dbReference type="PATRIC" id="fig|171101.6.peg.2059"/>
<dbReference type="eggNOG" id="COG0162">
    <property type="taxonomic scope" value="Bacteria"/>
</dbReference>
<dbReference type="HOGENOM" id="CLU_024003_0_3_9"/>
<dbReference type="Proteomes" id="UP000000586">
    <property type="component" value="Chromosome"/>
</dbReference>
<dbReference type="GO" id="GO:0005829">
    <property type="term" value="C:cytosol"/>
    <property type="evidence" value="ECO:0000318"/>
    <property type="project" value="GO_Central"/>
</dbReference>
<dbReference type="GO" id="GO:0005524">
    <property type="term" value="F:ATP binding"/>
    <property type="evidence" value="ECO:0007669"/>
    <property type="project" value="UniProtKB-UniRule"/>
</dbReference>
<dbReference type="GO" id="GO:0003723">
    <property type="term" value="F:RNA binding"/>
    <property type="evidence" value="ECO:0007669"/>
    <property type="project" value="UniProtKB-KW"/>
</dbReference>
<dbReference type="GO" id="GO:0004831">
    <property type="term" value="F:tyrosine-tRNA ligase activity"/>
    <property type="evidence" value="ECO:0000318"/>
    <property type="project" value="GO_Central"/>
</dbReference>
<dbReference type="GO" id="GO:0043039">
    <property type="term" value="P:tRNA aminoacylation"/>
    <property type="evidence" value="ECO:0000318"/>
    <property type="project" value="GO_Central"/>
</dbReference>
<dbReference type="GO" id="GO:0006437">
    <property type="term" value="P:tyrosyl-tRNA aminoacylation"/>
    <property type="evidence" value="ECO:0007669"/>
    <property type="project" value="UniProtKB-UniRule"/>
</dbReference>
<dbReference type="CDD" id="cd00165">
    <property type="entry name" value="S4"/>
    <property type="match status" value="1"/>
</dbReference>
<dbReference type="CDD" id="cd00805">
    <property type="entry name" value="TyrRS_core"/>
    <property type="match status" value="1"/>
</dbReference>
<dbReference type="FunFam" id="1.10.240.10:FF:000001">
    <property type="entry name" value="Tyrosine--tRNA ligase"/>
    <property type="match status" value="1"/>
</dbReference>
<dbReference type="FunFam" id="3.10.290.10:FF:000012">
    <property type="entry name" value="Tyrosine--tRNA ligase"/>
    <property type="match status" value="1"/>
</dbReference>
<dbReference type="FunFam" id="3.40.50.620:FF:000008">
    <property type="entry name" value="Tyrosine--tRNA ligase"/>
    <property type="match status" value="1"/>
</dbReference>
<dbReference type="Gene3D" id="3.40.50.620">
    <property type="entry name" value="HUPs"/>
    <property type="match status" value="1"/>
</dbReference>
<dbReference type="Gene3D" id="3.10.290.10">
    <property type="entry name" value="RNA-binding S4 domain"/>
    <property type="match status" value="1"/>
</dbReference>
<dbReference type="Gene3D" id="1.10.240.10">
    <property type="entry name" value="Tyrosyl-Transfer RNA Synthetase"/>
    <property type="match status" value="1"/>
</dbReference>
<dbReference type="HAMAP" id="MF_02006">
    <property type="entry name" value="Tyr_tRNA_synth_type1"/>
    <property type="match status" value="1"/>
</dbReference>
<dbReference type="InterPro" id="IPR001412">
    <property type="entry name" value="aa-tRNA-synth_I_CS"/>
</dbReference>
<dbReference type="InterPro" id="IPR002305">
    <property type="entry name" value="aa-tRNA-synth_Ic"/>
</dbReference>
<dbReference type="InterPro" id="IPR014729">
    <property type="entry name" value="Rossmann-like_a/b/a_fold"/>
</dbReference>
<dbReference type="InterPro" id="IPR002942">
    <property type="entry name" value="S4_RNA-bd"/>
</dbReference>
<dbReference type="InterPro" id="IPR036986">
    <property type="entry name" value="S4_RNA-bd_sf"/>
</dbReference>
<dbReference type="InterPro" id="IPR054608">
    <property type="entry name" value="SYY-like_C"/>
</dbReference>
<dbReference type="InterPro" id="IPR002307">
    <property type="entry name" value="Tyr-tRNA-ligase"/>
</dbReference>
<dbReference type="InterPro" id="IPR024088">
    <property type="entry name" value="Tyr-tRNA-ligase_bac-type"/>
</dbReference>
<dbReference type="InterPro" id="IPR024107">
    <property type="entry name" value="Tyr-tRNA-ligase_bac_1"/>
</dbReference>
<dbReference type="NCBIfam" id="TIGR00234">
    <property type="entry name" value="tyrS"/>
    <property type="match status" value="1"/>
</dbReference>
<dbReference type="PANTHER" id="PTHR11766:SF0">
    <property type="entry name" value="TYROSINE--TRNA LIGASE, MITOCHONDRIAL"/>
    <property type="match status" value="1"/>
</dbReference>
<dbReference type="PANTHER" id="PTHR11766">
    <property type="entry name" value="TYROSYL-TRNA SYNTHETASE"/>
    <property type="match status" value="1"/>
</dbReference>
<dbReference type="Pfam" id="PF22421">
    <property type="entry name" value="SYY_C-terminal"/>
    <property type="match status" value="1"/>
</dbReference>
<dbReference type="Pfam" id="PF00579">
    <property type="entry name" value="tRNA-synt_1b"/>
    <property type="match status" value="1"/>
</dbReference>
<dbReference type="PRINTS" id="PR01040">
    <property type="entry name" value="TRNASYNTHTYR"/>
</dbReference>
<dbReference type="SMART" id="SM00363">
    <property type="entry name" value="S4"/>
    <property type="match status" value="1"/>
</dbReference>
<dbReference type="SUPFAM" id="SSF55174">
    <property type="entry name" value="Alpha-L RNA-binding motif"/>
    <property type="match status" value="1"/>
</dbReference>
<dbReference type="SUPFAM" id="SSF52374">
    <property type="entry name" value="Nucleotidylyl transferase"/>
    <property type="match status" value="1"/>
</dbReference>
<dbReference type="PROSITE" id="PS00178">
    <property type="entry name" value="AA_TRNA_LIGASE_I"/>
    <property type="match status" value="1"/>
</dbReference>
<dbReference type="PROSITE" id="PS50889">
    <property type="entry name" value="S4"/>
    <property type="match status" value="1"/>
</dbReference>
<gene>
    <name evidence="1" type="primary">tyrS</name>
    <name type="ordered locus">spr1910</name>
</gene>